<sequence>MNLIPTVIEQTNRGERAYDIYSRLLKDRIIMLGSAIDDNVANSIVSQLLFLESQDPEKDIHIYINSPGGSITAGMAIYDTMQFIKPQVSTICIGMAASMGAFLLAAGEKGKRYALPNSEAMIHQPLGGAQGQATEIEIAAKRILFLREKLNQILADRTGQPLEVLQRDTDRDNFMTAEKALEYGLIDKIFTNR</sequence>
<protein>
    <recommendedName>
        <fullName evidence="1">ATP-dependent Clp protease proteolytic subunit 2</fullName>
        <ecNumber evidence="1">3.4.21.92</ecNumber>
    </recommendedName>
    <alternativeName>
        <fullName evidence="1">Endopeptidase Clp 2</fullName>
    </alternativeName>
</protein>
<proteinExistence type="inferred from homology"/>
<reference key="1">
    <citation type="journal article" date="2003" name="Nature">
        <title>The genome sequence of Bacillus anthracis Ames and comparison to closely related bacteria.</title>
        <authorList>
            <person name="Read T.D."/>
            <person name="Peterson S.N."/>
            <person name="Tourasse N.J."/>
            <person name="Baillie L.W."/>
            <person name="Paulsen I.T."/>
            <person name="Nelson K.E."/>
            <person name="Tettelin H."/>
            <person name="Fouts D.E."/>
            <person name="Eisen J.A."/>
            <person name="Gill S.R."/>
            <person name="Holtzapple E.K."/>
            <person name="Okstad O.A."/>
            <person name="Helgason E."/>
            <person name="Rilstone J."/>
            <person name="Wu M."/>
            <person name="Kolonay J.F."/>
            <person name="Beanan M.J."/>
            <person name="Dodson R.J."/>
            <person name="Brinkac L.M."/>
            <person name="Gwinn M.L."/>
            <person name="DeBoy R.T."/>
            <person name="Madpu R."/>
            <person name="Daugherty S.C."/>
            <person name="Durkin A.S."/>
            <person name="Haft D.H."/>
            <person name="Nelson W.C."/>
            <person name="Peterson J.D."/>
            <person name="Pop M."/>
            <person name="Khouri H.M."/>
            <person name="Radune D."/>
            <person name="Benton J.L."/>
            <person name="Mahamoud Y."/>
            <person name="Jiang L."/>
            <person name="Hance I.R."/>
            <person name="Weidman J.F."/>
            <person name="Berry K.J."/>
            <person name="Plaut R.D."/>
            <person name="Wolf A.M."/>
            <person name="Watkins K.L."/>
            <person name="Nierman W.C."/>
            <person name="Hazen A."/>
            <person name="Cline R.T."/>
            <person name="Redmond C."/>
            <person name="Thwaite J.E."/>
            <person name="White O."/>
            <person name="Salzberg S.L."/>
            <person name="Thomason B."/>
            <person name="Friedlander A.M."/>
            <person name="Koehler T.M."/>
            <person name="Hanna P.C."/>
            <person name="Kolstoe A.-B."/>
            <person name="Fraser C.M."/>
        </authorList>
    </citation>
    <scope>NUCLEOTIDE SEQUENCE [LARGE SCALE GENOMIC DNA]</scope>
    <source>
        <strain>Ames / isolate Porton</strain>
    </source>
</reference>
<reference key="2">
    <citation type="journal article" date="2009" name="J. Bacteriol.">
        <title>The complete genome sequence of Bacillus anthracis Ames 'Ancestor'.</title>
        <authorList>
            <person name="Ravel J."/>
            <person name="Jiang L."/>
            <person name="Stanley S.T."/>
            <person name="Wilson M.R."/>
            <person name="Decker R.S."/>
            <person name="Read T.D."/>
            <person name="Worsham P."/>
            <person name="Keim P.S."/>
            <person name="Salzberg S.L."/>
            <person name="Fraser-Liggett C.M."/>
            <person name="Rasko D.A."/>
        </authorList>
    </citation>
    <scope>NUCLEOTIDE SEQUENCE [LARGE SCALE GENOMIC DNA]</scope>
    <source>
        <strain>Ames ancestor</strain>
    </source>
</reference>
<reference key="3">
    <citation type="submission" date="2004-01" db="EMBL/GenBank/DDBJ databases">
        <title>Complete genome sequence of Bacillus anthracis Sterne.</title>
        <authorList>
            <person name="Brettin T.S."/>
            <person name="Bruce D."/>
            <person name="Challacombe J.F."/>
            <person name="Gilna P."/>
            <person name="Han C."/>
            <person name="Hill K."/>
            <person name="Hitchcock P."/>
            <person name="Jackson P."/>
            <person name="Keim P."/>
            <person name="Longmire J."/>
            <person name="Lucas S."/>
            <person name="Okinaka R."/>
            <person name="Richardson P."/>
            <person name="Rubin E."/>
            <person name="Tice H."/>
        </authorList>
    </citation>
    <scope>NUCLEOTIDE SEQUENCE [LARGE SCALE GENOMIC DNA]</scope>
    <source>
        <strain>Sterne</strain>
    </source>
</reference>
<dbReference type="EC" id="3.4.21.92" evidence="1"/>
<dbReference type="EMBL" id="AE016879">
    <property type="protein sequence ID" value="AAP29039.1"/>
    <property type="molecule type" value="Genomic_DNA"/>
</dbReference>
<dbReference type="EMBL" id="AE017334">
    <property type="protein sequence ID" value="AAT34514.1"/>
    <property type="molecule type" value="Genomic_DNA"/>
</dbReference>
<dbReference type="EMBL" id="AE017225">
    <property type="protein sequence ID" value="AAT57289.1"/>
    <property type="molecule type" value="Genomic_DNA"/>
</dbReference>
<dbReference type="RefSeq" id="NP_847553.1">
    <property type="nucleotide sequence ID" value="NC_003997.3"/>
</dbReference>
<dbReference type="RefSeq" id="YP_031239.1">
    <property type="nucleotide sequence ID" value="NC_005945.1"/>
</dbReference>
<dbReference type="SMR" id="Q81X63"/>
<dbReference type="IntAct" id="Q81X63">
    <property type="interactions" value="2"/>
</dbReference>
<dbReference type="STRING" id="261594.GBAA_5380"/>
<dbReference type="MEROPS" id="S14.001"/>
<dbReference type="DNASU" id="1084924"/>
<dbReference type="GeneID" id="45024983"/>
<dbReference type="KEGG" id="ban:BA_5380"/>
<dbReference type="KEGG" id="banh:HYU01_26290"/>
<dbReference type="KEGG" id="bar:GBAA_5380"/>
<dbReference type="KEGG" id="bat:BAS5000"/>
<dbReference type="PATRIC" id="fig|198094.11.peg.5338"/>
<dbReference type="eggNOG" id="COG0740">
    <property type="taxonomic scope" value="Bacteria"/>
</dbReference>
<dbReference type="HOGENOM" id="CLU_058707_3_2_9"/>
<dbReference type="OMA" id="IHQPYSE"/>
<dbReference type="OrthoDB" id="9802800at2"/>
<dbReference type="Proteomes" id="UP000000427">
    <property type="component" value="Chromosome"/>
</dbReference>
<dbReference type="Proteomes" id="UP000000594">
    <property type="component" value="Chromosome"/>
</dbReference>
<dbReference type="GO" id="GO:0005737">
    <property type="term" value="C:cytoplasm"/>
    <property type="evidence" value="ECO:0007669"/>
    <property type="project" value="UniProtKB-SubCell"/>
</dbReference>
<dbReference type="GO" id="GO:0009368">
    <property type="term" value="C:endopeptidase Clp complex"/>
    <property type="evidence" value="ECO:0007669"/>
    <property type="project" value="TreeGrafter"/>
</dbReference>
<dbReference type="GO" id="GO:0004176">
    <property type="term" value="F:ATP-dependent peptidase activity"/>
    <property type="evidence" value="ECO:0007669"/>
    <property type="project" value="InterPro"/>
</dbReference>
<dbReference type="GO" id="GO:0051117">
    <property type="term" value="F:ATPase binding"/>
    <property type="evidence" value="ECO:0007669"/>
    <property type="project" value="TreeGrafter"/>
</dbReference>
<dbReference type="GO" id="GO:0004252">
    <property type="term" value="F:serine-type endopeptidase activity"/>
    <property type="evidence" value="ECO:0007669"/>
    <property type="project" value="UniProtKB-UniRule"/>
</dbReference>
<dbReference type="GO" id="GO:0006515">
    <property type="term" value="P:protein quality control for misfolded or incompletely synthesized proteins"/>
    <property type="evidence" value="ECO:0007669"/>
    <property type="project" value="TreeGrafter"/>
</dbReference>
<dbReference type="CDD" id="cd07017">
    <property type="entry name" value="S14_ClpP_2"/>
    <property type="match status" value="1"/>
</dbReference>
<dbReference type="FunFam" id="3.90.226.10:FF:000001">
    <property type="entry name" value="ATP-dependent Clp protease proteolytic subunit"/>
    <property type="match status" value="1"/>
</dbReference>
<dbReference type="Gene3D" id="3.90.226.10">
    <property type="entry name" value="2-enoyl-CoA Hydratase, Chain A, domain 1"/>
    <property type="match status" value="1"/>
</dbReference>
<dbReference type="HAMAP" id="MF_00444">
    <property type="entry name" value="ClpP"/>
    <property type="match status" value="1"/>
</dbReference>
<dbReference type="InterPro" id="IPR001907">
    <property type="entry name" value="ClpP"/>
</dbReference>
<dbReference type="InterPro" id="IPR029045">
    <property type="entry name" value="ClpP/crotonase-like_dom_sf"/>
</dbReference>
<dbReference type="InterPro" id="IPR023562">
    <property type="entry name" value="ClpP/TepA"/>
</dbReference>
<dbReference type="InterPro" id="IPR018215">
    <property type="entry name" value="ClpP_Ser_AS"/>
</dbReference>
<dbReference type="NCBIfam" id="TIGR00493">
    <property type="entry name" value="clpP"/>
    <property type="match status" value="1"/>
</dbReference>
<dbReference type="NCBIfam" id="NF001368">
    <property type="entry name" value="PRK00277.1"/>
    <property type="match status" value="1"/>
</dbReference>
<dbReference type="NCBIfam" id="NF009205">
    <property type="entry name" value="PRK12553.1"/>
    <property type="match status" value="1"/>
</dbReference>
<dbReference type="PANTHER" id="PTHR10381">
    <property type="entry name" value="ATP-DEPENDENT CLP PROTEASE PROTEOLYTIC SUBUNIT"/>
    <property type="match status" value="1"/>
</dbReference>
<dbReference type="PANTHER" id="PTHR10381:SF70">
    <property type="entry name" value="ATP-DEPENDENT CLP PROTEASE PROTEOLYTIC SUBUNIT"/>
    <property type="match status" value="1"/>
</dbReference>
<dbReference type="Pfam" id="PF00574">
    <property type="entry name" value="CLP_protease"/>
    <property type="match status" value="1"/>
</dbReference>
<dbReference type="PRINTS" id="PR00127">
    <property type="entry name" value="CLPPROTEASEP"/>
</dbReference>
<dbReference type="SUPFAM" id="SSF52096">
    <property type="entry name" value="ClpP/crotonase"/>
    <property type="match status" value="1"/>
</dbReference>
<dbReference type="PROSITE" id="PS00381">
    <property type="entry name" value="CLP_PROTEASE_SER"/>
    <property type="match status" value="1"/>
</dbReference>
<organism>
    <name type="scientific">Bacillus anthracis</name>
    <dbReference type="NCBI Taxonomy" id="1392"/>
    <lineage>
        <taxon>Bacteria</taxon>
        <taxon>Bacillati</taxon>
        <taxon>Bacillota</taxon>
        <taxon>Bacilli</taxon>
        <taxon>Bacillales</taxon>
        <taxon>Bacillaceae</taxon>
        <taxon>Bacillus</taxon>
        <taxon>Bacillus cereus group</taxon>
    </lineage>
</organism>
<name>CLPP2_BACAN</name>
<evidence type="ECO:0000255" key="1">
    <source>
        <dbReference type="HAMAP-Rule" id="MF_00444"/>
    </source>
</evidence>
<feature type="chain" id="PRO_0000179485" description="ATP-dependent Clp protease proteolytic subunit 2">
    <location>
        <begin position="1"/>
        <end position="193"/>
    </location>
</feature>
<feature type="active site" description="Nucleophile" evidence="1">
    <location>
        <position position="98"/>
    </location>
</feature>
<feature type="active site" evidence="1">
    <location>
        <position position="123"/>
    </location>
</feature>
<gene>
    <name evidence="1" type="primary">clpP2</name>
    <name type="ordered locus">BA_5380</name>
    <name type="ordered locus">GBAA_5380</name>
    <name type="ordered locus">BAS5000</name>
</gene>
<accession>Q81X63</accession>
<accession>Q6HQZ9</accession>
<accession>Q6KKB8</accession>
<keyword id="KW-0963">Cytoplasm</keyword>
<keyword id="KW-0378">Hydrolase</keyword>
<keyword id="KW-0645">Protease</keyword>
<keyword id="KW-1185">Reference proteome</keyword>
<keyword id="KW-0720">Serine protease</keyword>
<comment type="function">
    <text evidence="1">Cleaves peptides in various proteins in a process that requires ATP hydrolysis. Has a chymotrypsin-like activity. Plays a major role in the degradation of misfolded proteins.</text>
</comment>
<comment type="catalytic activity">
    <reaction evidence="1">
        <text>Hydrolysis of proteins to small peptides in the presence of ATP and magnesium. alpha-casein is the usual test substrate. In the absence of ATP, only oligopeptides shorter than five residues are hydrolyzed (such as succinyl-Leu-Tyr-|-NHMec, and Leu-Tyr-Leu-|-Tyr-Trp, in which cleavage of the -Tyr-|-Leu- and -Tyr-|-Trp bonds also occurs).</text>
        <dbReference type="EC" id="3.4.21.92"/>
    </reaction>
</comment>
<comment type="subunit">
    <text evidence="1">Fourteen ClpP subunits assemble into 2 heptameric rings which stack back to back to give a disk-like structure with a central cavity, resembling the structure of eukaryotic proteasomes.</text>
</comment>
<comment type="subcellular location">
    <subcellularLocation>
        <location evidence="1">Cytoplasm</location>
    </subcellularLocation>
</comment>
<comment type="similarity">
    <text evidence="1">Belongs to the peptidase S14 family.</text>
</comment>